<proteinExistence type="evidence at protein level"/>
<feature type="initiator methionine" description="Removed" evidence="6">
    <location>
        <position position="1"/>
    </location>
</feature>
<feature type="chain" id="PRO_0000129351" description="Large ribosomal subunit protein uL4">
    <location>
        <begin position="2"/>
        <end position="419"/>
    </location>
</feature>
<feature type="region of interest" description="Disordered" evidence="3">
    <location>
        <begin position="364"/>
        <end position="419"/>
    </location>
</feature>
<feature type="compositionally biased region" description="Basic and acidic residues" evidence="3">
    <location>
        <begin position="364"/>
        <end position="379"/>
    </location>
</feature>
<feature type="compositionally biased region" description="Basic residues" evidence="3">
    <location>
        <begin position="393"/>
        <end position="402"/>
    </location>
</feature>
<feature type="compositionally biased region" description="Basic and acidic residues" evidence="3">
    <location>
        <begin position="404"/>
        <end position="419"/>
    </location>
</feature>
<feature type="modified residue" description="N-acetylalanine" evidence="6">
    <location>
        <position position="2"/>
    </location>
</feature>
<feature type="modified residue" description="N6-acetyllysine" evidence="1">
    <location>
        <position position="14"/>
    </location>
</feature>
<feature type="modified residue" description="Omega-N-methylarginine" evidence="12">
    <location>
        <position position="97"/>
    </location>
</feature>
<feature type="modified residue" description="N6-acetyllysine" evidence="1">
    <location>
        <position position="106"/>
    </location>
</feature>
<feature type="modified residue" description="N6-acetyllysine" evidence="11">
    <location>
        <position position="259"/>
    </location>
</feature>
<feature type="modified residue" description="Phosphothreonine" evidence="1">
    <location>
        <position position="266"/>
    </location>
</feature>
<feature type="modified residue" description="Phosphoserine" evidence="2">
    <location>
        <position position="290"/>
    </location>
</feature>
<feature type="modified residue" description="Phosphoserine" evidence="10">
    <location>
        <position position="295"/>
    </location>
</feature>
<feature type="modified residue" description="Citrulline" evidence="4">
    <location>
        <position position="300"/>
    </location>
</feature>
<feature type="modified residue" description="N6-acetyllysine" evidence="1">
    <location>
        <position position="333"/>
    </location>
</feature>
<feature type="modified residue" description="N6-acetyllysine" evidence="11">
    <location>
        <position position="353"/>
    </location>
</feature>
<feature type="modified residue" description="N6-acetyllysine; alternate" evidence="11">
    <location>
        <position position="364"/>
    </location>
</feature>
<feature type="modified residue" description="Phosphoserine" evidence="1">
    <location>
        <position position="365"/>
    </location>
</feature>
<feature type="cross-link" description="Glycyl lysine isopeptide (Lys-Gly) (interchain with G-Cter in SUMO2)" evidence="1">
    <location>
        <position position="239"/>
    </location>
</feature>
<feature type="cross-link" description="Glycyl lysine isopeptide (Lys-Gly) (interchain with G-Cter in SUMO2)" evidence="1">
    <location>
        <position position="327"/>
    </location>
</feature>
<feature type="cross-link" description="Glycyl lysine isopeptide (Lys-Gly) (interchain with G-Cter in SUMO1); alternate" evidence="1">
    <location>
        <position position="364"/>
    </location>
</feature>
<feature type="sequence conflict" description="In Ref. 1; BAB27375." evidence="7" ref="1">
    <original>Y</original>
    <variation>F</variation>
    <location>
        <position position="161"/>
    </location>
</feature>
<sequence>MACARPLISVYSEKGESSGKNVTLPAVFKAPIRPDIVNFVHTNLRKNNRQPYAVSELAGHQTSAESWGTGRAVARIPRVRGGGTHRSGQGAFGNMCRGGRMFAPTKTWRRWHRRVNTTQKRYAICSALAASALPALVMSKGHRIEEVPELPLVVEDKVEGYKKTKEAVQLLKKLKAWNDIKKVYASQRMRAGKGKMRNRRRIQRRGPCIIYNEDNGIIKAFRNIPGITLLNVSKLNILKLAPGGHVGRFCIWTESAFRKLDELYGTWRKAASLKSNYNLPMHKMMNTDLSRILKSPEIQRALRAPRKKIHRRVLKKNPLKNLRIMLKLNPYAKTMRRNTILRQARNHKLRVKKLEAAATALATKSEKVVPEKGTADKKPAVGKKGKKVDAKKQKPAGKKVVAKKPAEKKPTTEEKKPAA</sequence>
<accession>Q9D8E6</accession>
<accession>Q9CY08</accession>
<comment type="function">
    <text evidence="5">Component of the large ribosomal subunit (PubMed:36517592). The ribosome is a large ribonucleoprotein complex responsible for the synthesis of proteins in the cell (PubMed:36517592).</text>
</comment>
<comment type="subunit">
    <text evidence="2 5">Component of the large ribosomal subunit (PubMed:36517592). May bind IPO9 with low affinity (By similarity). Interacts with RBM3 (By similarity).</text>
</comment>
<comment type="subcellular location">
    <subcellularLocation>
        <location evidence="5">Cytoplasm</location>
    </subcellularLocation>
</comment>
<comment type="PTM">
    <text evidence="4">Citrullinated by PADI4.</text>
</comment>
<comment type="similarity">
    <text evidence="7">Belongs to the universal ribosomal protein uL4 family.</text>
</comment>
<protein>
    <recommendedName>
        <fullName evidence="7">Large ribosomal subunit protein uL4</fullName>
    </recommendedName>
    <alternativeName>
        <fullName>60S ribosomal protein L4</fullName>
    </alternativeName>
</protein>
<reference key="1">
    <citation type="journal article" date="2005" name="Science">
        <title>The transcriptional landscape of the mammalian genome.</title>
        <authorList>
            <person name="Carninci P."/>
            <person name="Kasukawa T."/>
            <person name="Katayama S."/>
            <person name="Gough J."/>
            <person name="Frith M.C."/>
            <person name="Maeda N."/>
            <person name="Oyama R."/>
            <person name="Ravasi T."/>
            <person name="Lenhard B."/>
            <person name="Wells C."/>
            <person name="Kodzius R."/>
            <person name="Shimokawa K."/>
            <person name="Bajic V.B."/>
            <person name="Brenner S.E."/>
            <person name="Batalov S."/>
            <person name="Forrest A.R."/>
            <person name="Zavolan M."/>
            <person name="Davis M.J."/>
            <person name="Wilming L.G."/>
            <person name="Aidinis V."/>
            <person name="Allen J.E."/>
            <person name="Ambesi-Impiombato A."/>
            <person name="Apweiler R."/>
            <person name="Aturaliya R.N."/>
            <person name="Bailey T.L."/>
            <person name="Bansal M."/>
            <person name="Baxter L."/>
            <person name="Beisel K.W."/>
            <person name="Bersano T."/>
            <person name="Bono H."/>
            <person name="Chalk A.M."/>
            <person name="Chiu K.P."/>
            <person name="Choudhary V."/>
            <person name="Christoffels A."/>
            <person name="Clutterbuck D.R."/>
            <person name="Crowe M.L."/>
            <person name="Dalla E."/>
            <person name="Dalrymple B.P."/>
            <person name="de Bono B."/>
            <person name="Della Gatta G."/>
            <person name="di Bernardo D."/>
            <person name="Down T."/>
            <person name="Engstrom P."/>
            <person name="Fagiolini M."/>
            <person name="Faulkner G."/>
            <person name="Fletcher C.F."/>
            <person name="Fukushima T."/>
            <person name="Furuno M."/>
            <person name="Futaki S."/>
            <person name="Gariboldi M."/>
            <person name="Georgii-Hemming P."/>
            <person name="Gingeras T.R."/>
            <person name="Gojobori T."/>
            <person name="Green R.E."/>
            <person name="Gustincich S."/>
            <person name="Harbers M."/>
            <person name="Hayashi Y."/>
            <person name="Hensch T.K."/>
            <person name="Hirokawa N."/>
            <person name="Hill D."/>
            <person name="Huminiecki L."/>
            <person name="Iacono M."/>
            <person name="Ikeo K."/>
            <person name="Iwama A."/>
            <person name="Ishikawa T."/>
            <person name="Jakt M."/>
            <person name="Kanapin A."/>
            <person name="Katoh M."/>
            <person name="Kawasawa Y."/>
            <person name="Kelso J."/>
            <person name="Kitamura H."/>
            <person name="Kitano H."/>
            <person name="Kollias G."/>
            <person name="Krishnan S.P."/>
            <person name="Kruger A."/>
            <person name="Kummerfeld S.K."/>
            <person name="Kurochkin I.V."/>
            <person name="Lareau L.F."/>
            <person name="Lazarevic D."/>
            <person name="Lipovich L."/>
            <person name="Liu J."/>
            <person name="Liuni S."/>
            <person name="McWilliam S."/>
            <person name="Madan Babu M."/>
            <person name="Madera M."/>
            <person name="Marchionni L."/>
            <person name="Matsuda H."/>
            <person name="Matsuzawa S."/>
            <person name="Miki H."/>
            <person name="Mignone F."/>
            <person name="Miyake S."/>
            <person name="Morris K."/>
            <person name="Mottagui-Tabar S."/>
            <person name="Mulder N."/>
            <person name="Nakano N."/>
            <person name="Nakauchi H."/>
            <person name="Ng P."/>
            <person name="Nilsson R."/>
            <person name="Nishiguchi S."/>
            <person name="Nishikawa S."/>
            <person name="Nori F."/>
            <person name="Ohara O."/>
            <person name="Okazaki Y."/>
            <person name="Orlando V."/>
            <person name="Pang K.C."/>
            <person name="Pavan W.J."/>
            <person name="Pavesi G."/>
            <person name="Pesole G."/>
            <person name="Petrovsky N."/>
            <person name="Piazza S."/>
            <person name="Reed J."/>
            <person name="Reid J.F."/>
            <person name="Ring B.Z."/>
            <person name="Ringwald M."/>
            <person name="Rost B."/>
            <person name="Ruan Y."/>
            <person name="Salzberg S.L."/>
            <person name="Sandelin A."/>
            <person name="Schneider C."/>
            <person name="Schoenbach C."/>
            <person name="Sekiguchi K."/>
            <person name="Semple C.A."/>
            <person name="Seno S."/>
            <person name="Sessa L."/>
            <person name="Sheng Y."/>
            <person name="Shibata Y."/>
            <person name="Shimada H."/>
            <person name="Shimada K."/>
            <person name="Silva D."/>
            <person name="Sinclair B."/>
            <person name="Sperling S."/>
            <person name="Stupka E."/>
            <person name="Sugiura K."/>
            <person name="Sultana R."/>
            <person name="Takenaka Y."/>
            <person name="Taki K."/>
            <person name="Tammoja K."/>
            <person name="Tan S.L."/>
            <person name="Tang S."/>
            <person name="Taylor M.S."/>
            <person name="Tegner J."/>
            <person name="Teichmann S.A."/>
            <person name="Ueda H.R."/>
            <person name="van Nimwegen E."/>
            <person name="Verardo R."/>
            <person name="Wei C.L."/>
            <person name="Yagi K."/>
            <person name="Yamanishi H."/>
            <person name="Zabarovsky E."/>
            <person name="Zhu S."/>
            <person name="Zimmer A."/>
            <person name="Hide W."/>
            <person name="Bult C."/>
            <person name="Grimmond S.M."/>
            <person name="Teasdale R.D."/>
            <person name="Liu E.T."/>
            <person name="Brusic V."/>
            <person name="Quackenbush J."/>
            <person name="Wahlestedt C."/>
            <person name="Mattick J.S."/>
            <person name="Hume D.A."/>
            <person name="Kai C."/>
            <person name="Sasaki D."/>
            <person name="Tomaru Y."/>
            <person name="Fukuda S."/>
            <person name="Kanamori-Katayama M."/>
            <person name="Suzuki M."/>
            <person name="Aoki J."/>
            <person name="Arakawa T."/>
            <person name="Iida J."/>
            <person name="Imamura K."/>
            <person name="Itoh M."/>
            <person name="Kato T."/>
            <person name="Kawaji H."/>
            <person name="Kawagashira N."/>
            <person name="Kawashima T."/>
            <person name="Kojima M."/>
            <person name="Kondo S."/>
            <person name="Konno H."/>
            <person name="Nakano K."/>
            <person name="Ninomiya N."/>
            <person name="Nishio T."/>
            <person name="Okada M."/>
            <person name="Plessy C."/>
            <person name="Shibata K."/>
            <person name="Shiraki T."/>
            <person name="Suzuki S."/>
            <person name="Tagami M."/>
            <person name="Waki K."/>
            <person name="Watahiki A."/>
            <person name="Okamura-Oho Y."/>
            <person name="Suzuki H."/>
            <person name="Kawai J."/>
            <person name="Hayashizaki Y."/>
        </authorList>
    </citation>
    <scope>NUCLEOTIDE SEQUENCE [LARGE SCALE MRNA]</scope>
    <source>
        <strain>C57BL/6J</strain>
        <tissue>Embryonic liver</tissue>
        <tissue>Small intestine</tissue>
    </source>
</reference>
<reference key="2">
    <citation type="journal article" date="2004" name="Genome Res.">
        <title>The status, quality, and expansion of the NIH full-length cDNA project: the Mammalian Gene Collection (MGC).</title>
        <authorList>
            <consortium name="The MGC Project Team"/>
        </authorList>
    </citation>
    <scope>NUCLEOTIDE SEQUENCE [LARGE SCALE MRNA]</scope>
</reference>
<reference key="3">
    <citation type="submission" date="2006-03" db="UniProtKB">
        <authorList>
            <person name="Kanor S."/>
            <person name="Quadroni M."/>
            <person name="Bienvenut W.V."/>
        </authorList>
    </citation>
    <scope>PROTEIN SEQUENCE OF 2-13; 165-171 AND 353-363</scope>
    <scope>CLEAVAGE OF INITIATOR METHIONINE</scope>
    <scope>ACETYLATION AT ALA-2</scope>
    <scope>IDENTIFICATION BY MASS SPECTROMETRY</scope>
    <source>
        <strain>C57BL/6J</strain>
        <tissue>Skeletal muscle</tissue>
    </source>
</reference>
<reference key="4">
    <citation type="journal article" date="2002" name="EMBO J.">
        <title>Importins fulfill a dual function as nuclear import receptors and cytoplasmic chaperones for exposed basic domains.</title>
        <authorList>
            <person name="Jaekel S."/>
            <person name="Mingot J.-M."/>
            <person name="Schwarzmaier P."/>
            <person name="Hartmann E."/>
            <person name="Goerlich D."/>
        </authorList>
    </citation>
    <scope>INTERACTION WITH IPO9</scope>
</reference>
<reference key="5">
    <citation type="journal article" date="2009" name="Mol. Cell. Proteomics">
        <title>Large scale localization of protein phosphorylation by use of electron capture dissociation mass spectrometry.</title>
        <authorList>
            <person name="Sweet S.M."/>
            <person name="Bailey C.M."/>
            <person name="Cunningham D.L."/>
            <person name="Heath J.K."/>
            <person name="Cooper H.J."/>
        </authorList>
    </citation>
    <scope>PHOSPHORYLATION [LARGE SCALE ANALYSIS] AT SER-295</scope>
    <scope>IDENTIFICATION BY MASS SPECTROMETRY [LARGE SCALE ANALYSIS]</scope>
    <source>
        <tissue>Embryonic fibroblast</tissue>
    </source>
</reference>
<reference key="6">
    <citation type="journal article" date="2010" name="Cell">
        <title>A tissue-specific atlas of mouse protein phosphorylation and expression.</title>
        <authorList>
            <person name="Huttlin E.L."/>
            <person name="Jedrychowski M.P."/>
            <person name="Elias J.E."/>
            <person name="Goswami T."/>
            <person name="Rad R."/>
            <person name="Beausoleil S.A."/>
            <person name="Villen J."/>
            <person name="Haas W."/>
            <person name="Sowa M.E."/>
            <person name="Gygi S.P."/>
        </authorList>
    </citation>
    <scope>IDENTIFICATION BY MASS SPECTROMETRY [LARGE SCALE ANALYSIS]</scope>
    <source>
        <tissue>Brain</tissue>
        <tissue>Brown adipose tissue</tissue>
        <tissue>Heart</tissue>
        <tissue>Kidney</tissue>
        <tissue>Liver</tissue>
        <tissue>Lung</tissue>
        <tissue>Pancreas</tissue>
        <tissue>Spleen</tissue>
        <tissue>Testis</tissue>
    </source>
</reference>
<reference key="7">
    <citation type="journal article" date="2013" name="Mol. Cell">
        <title>SIRT5-mediated lysine desuccinylation impacts diverse metabolic pathways.</title>
        <authorList>
            <person name="Park J."/>
            <person name="Chen Y."/>
            <person name="Tishkoff D.X."/>
            <person name="Peng C."/>
            <person name="Tan M."/>
            <person name="Dai L."/>
            <person name="Xie Z."/>
            <person name="Zhang Y."/>
            <person name="Zwaans B.M."/>
            <person name="Skinner M.E."/>
            <person name="Lombard D.B."/>
            <person name="Zhao Y."/>
        </authorList>
    </citation>
    <scope>ACETYLATION [LARGE SCALE ANALYSIS] AT LYS-259; LYS-353 AND LYS-364</scope>
    <scope>IDENTIFICATION BY MASS SPECTROMETRY [LARGE SCALE ANALYSIS]</scope>
    <source>
        <tissue>Embryonic fibroblast</tissue>
    </source>
</reference>
<reference key="8">
    <citation type="journal article" date="2014" name="Mol. Cell. Proteomics">
        <title>Immunoaffinity enrichment and mass spectrometry analysis of protein methylation.</title>
        <authorList>
            <person name="Guo A."/>
            <person name="Gu H."/>
            <person name="Zhou J."/>
            <person name="Mulhern D."/>
            <person name="Wang Y."/>
            <person name="Lee K.A."/>
            <person name="Yang V."/>
            <person name="Aguiar M."/>
            <person name="Kornhauser J."/>
            <person name="Jia X."/>
            <person name="Ren J."/>
            <person name="Beausoleil S.A."/>
            <person name="Silva J.C."/>
            <person name="Vemulapalli V."/>
            <person name="Bedford M.T."/>
            <person name="Comb M.J."/>
        </authorList>
    </citation>
    <scope>METHYLATION [LARGE SCALE ANALYSIS] AT ARG-97</scope>
    <scope>IDENTIFICATION BY MASS SPECTROMETRY [LARGE SCALE ANALYSIS]</scope>
    <source>
        <tissue>Brain</tissue>
        <tissue>Embryo</tissue>
    </source>
</reference>
<reference key="9">
    <citation type="journal article" date="2014" name="Nature">
        <title>Citrullination regulates pluripotency and histone H1 binding to chromatin.</title>
        <authorList>
            <person name="Christophorou M.A."/>
            <person name="Castelo-Branco G."/>
            <person name="Halley-Stott R.P."/>
            <person name="Oliveira C.S."/>
            <person name="Loos R."/>
            <person name="Radzisheuskaya A."/>
            <person name="Mowen K.A."/>
            <person name="Bertone P."/>
            <person name="Silva J.C."/>
            <person name="Zernicka-Goetz M."/>
            <person name="Nielsen M.L."/>
            <person name="Gurdon J.B."/>
            <person name="Kouzarides T."/>
        </authorList>
    </citation>
    <scope>CITRULLINATION AT ARG-300</scope>
</reference>
<reference evidence="8 9" key="10">
    <citation type="journal article" date="2022" name="Nature">
        <title>A male germ-cell-specific ribosome controls male fertility.</title>
        <authorList>
            <person name="Li H."/>
            <person name="Huo Y."/>
            <person name="He X."/>
            <person name="Yao L."/>
            <person name="Zhang H."/>
            <person name="Cui Y."/>
            <person name="Xiao H."/>
            <person name="Xie W."/>
            <person name="Zhang D."/>
            <person name="Wang Y."/>
            <person name="Zhang S."/>
            <person name="Tu H."/>
            <person name="Cheng Y."/>
            <person name="Guo Y."/>
            <person name="Cao X."/>
            <person name="Zhu Y."/>
            <person name="Jiang T."/>
            <person name="Guo X."/>
            <person name="Qin Y."/>
            <person name="Sha J."/>
        </authorList>
    </citation>
    <scope>STRUCTURE BY ELECTRON MICROSCOPY (3.03 ANGSTROMS) OF RIBOSOME</scope>
    <scope>FUNCTION</scope>
    <scope>SUBUNIT</scope>
    <scope>SUBCELLULAR LOCATION</scope>
</reference>
<dbReference type="EMBL" id="AK008098">
    <property type="protein sequence ID" value="BAB25458.1"/>
    <property type="molecule type" value="mRNA"/>
</dbReference>
<dbReference type="EMBL" id="AK011068">
    <property type="protein sequence ID" value="BAB27375.1"/>
    <property type="molecule type" value="mRNA"/>
</dbReference>
<dbReference type="EMBL" id="BC003459">
    <property type="protein sequence ID" value="AAH03459.1"/>
    <property type="molecule type" value="mRNA"/>
</dbReference>
<dbReference type="CCDS" id="CCDS40667.1"/>
<dbReference type="RefSeq" id="NP_077174.1">
    <property type="nucleotide sequence ID" value="NM_024212.5"/>
</dbReference>
<dbReference type="RefSeq" id="XP_036011111.1">
    <property type="nucleotide sequence ID" value="XM_036155218.1"/>
</dbReference>
<dbReference type="PDB" id="6SWA">
    <property type="method" value="EM"/>
    <property type="resolution" value="3.10 A"/>
    <property type="chains" value="C=1-419"/>
</dbReference>
<dbReference type="PDB" id="7CPU">
    <property type="method" value="EM"/>
    <property type="resolution" value="2.82 A"/>
    <property type="chains" value="LC=1-419"/>
</dbReference>
<dbReference type="PDB" id="7CPV">
    <property type="method" value="EM"/>
    <property type="resolution" value="3.03 A"/>
    <property type="chains" value="LC=1-419"/>
</dbReference>
<dbReference type="PDB" id="7LS1">
    <property type="method" value="EM"/>
    <property type="resolution" value="3.30 A"/>
    <property type="chains" value="F2=1-419"/>
</dbReference>
<dbReference type="PDB" id="7LS2">
    <property type="method" value="EM"/>
    <property type="resolution" value="3.10 A"/>
    <property type="chains" value="F2=1-419"/>
</dbReference>
<dbReference type="PDBsum" id="6SWA"/>
<dbReference type="PDBsum" id="7CPU"/>
<dbReference type="PDBsum" id="7CPV"/>
<dbReference type="PDBsum" id="7LS1"/>
<dbReference type="PDBsum" id="7LS2"/>
<dbReference type="EMDB" id="EMD-10321"/>
<dbReference type="EMDB" id="EMD-23500"/>
<dbReference type="EMDB" id="EMD-23501"/>
<dbReference type="EMDB" id="EMD-30432"/>
<dbReference type="EMDB" id="EMD-30433"/>
<dbReference type="SMR" id="Q9D8E6"/>
<dbReference type="BioGRID" id="212515">
    <property type="interactions" value="111"/>
</dbReference>
<dbReference type="ComplexPortal" id="CPX-5262">
    <property type="entry name" value="60S cytosolic large ribosomal subunit"/>
</dbReference>
<dbReference type="ComplexPortal" id="CPX-7662">
    <property type="entry name" value="60S cytosolic large ribosomal subunit, testis-specific variant"/>
</dbReference>
<dbReference type="ComplexPortal" id="CPX-7663">
    <property type="entry name" value="60S cytosolic large ribosomal subunit, striated muscle variant"/>
</dbReference>
<dbReference type="CORUM" id="Q9D8E6"/>
<dbReference type="FunCoup" id="Q9D8E6">
    <property type="interactions" value="1913"/>
</dbReference>
<dbReference type="IntAct" id="Q9D8E6">
    <property type="interactions" value="4"/>
</dbReference>
<dbReference type="MINT" id="Q9D8E6"/>
<dbReference type="STRING" id="10090.ENSMUSP00000034966"/>
<dbReference type="GlyGen" id="Q9D8E6">
    <property type="glycosylation" value="3 sites, 2 N-linked glycans (2 sites), 1 O-linked glycan (1 site)"/>
</dbReference>
<dbReference type="iPTMnet" id="Q9D8E6"/>
<dbReference type="PhosphoSitePlus" id="Q9D8E6"/>
<dbReference type="SwissPalm" id="Q9D8E6"/>
<dbReference type="jPOST" id="Q9D8E6"/>
<dbReference type="PaxDb" id="10090-ENSMUSP00000034966"/>
<dbReference type="ProteomicsDB" id="253305"/>
<dbReference type="Pumba" id="Q9D8E6"/>
<dbReference type="Antibodypedia" id="26140">
    <property type="antibodies" value="172 antibodies from 29 providers"/>
</dbReference>
<dbReference type="DNASU" id="67891"/>
<dbReference type="Ensembl" id="ENSMUST00000034966.9">
    <property type="protein sequence ID" value="ENSMUSP00000034966.8"/>
    <property type="gene ID" value="ENSMUSG00000032399.9"/>
</dbReference>
<dbReference type="GeneID" id="67891"/>
<dbReference type="KEGG" id="mmu:67891"/>
<dbReference type="UCSC" id="uc009qbn.1">
    <property type="organism name" value="mouse"/>
</dbReference>
<dbReference type="AGR" id="MGI:1915141"/>
<dbReference type="CTD" id="6124"/>
<dbReference type="MGI" id="MGI:1915141">
    <property type="gene designation" value="Rpl4"/>
</dbReference>
<dbReference type="VEuPathDB" id="HostDB:ENSMUSG00000032399"/>
<dbReference type="eggNOG" id="KOG1475">
    <property type="taxonomic scope" value="Eukaryota"/>
</dbReference>
<dbReference type="GeneTree" id="ENSGT00390000018145"/>
<dbReference type="HOGENOM" id="CLU_026535_4_0_1"/>
<dbReference type="InParanoid" id="Q9D8E6"/>
<dbReference type="OMA" id="ALYGTWR"/>
<dbReference type="OrthoDB" id="10259785at2759"/>
<dbReference type="PhylomeDB" id="Q9D8E6"/>
<dbReference type="TreeFam" id="TF300593"/>
<dbReference type="Reactome" id="R-MMU-156827">
    <property type="pathway name" value="L13a-mediated translational silencing of Ceruloplasmin expression"/>
</dbReference>
<dbReference type="Reactome" id="R-MMU-1799339">
    <property type="pathway name" value="SRP-dependent cotranslational protein targeting to membrane"/>
</dbReference>
<dbReference type="Reactome" id="R-MMU-6791226">
    <property type="pathway name" value="Major pathway of rRNA processing in the nucleolus and cytosol"/>
</dbReference>
<dbReference type="Reactome" id="R-MMU-72689">
    <property type="pathway name" value="Formation of a pool of free 40S subunits"/>
</dbReference>
<dbReference type="Reactome" id="R-MMU-72706">
    <property type="pathway name" value="GTP hydrolysis and joining of the 60S ribosomal subunit"/>
</dbReference>
<dbReference type="Reactome" id="R-MMU-975956">
    <property type="pathway name" value="Nonsense Mediated Decay (NMD) independent of the Exon Junction Complex (EJC)"/>
</dbReference>
<dbReference type="Reactome" id="R-MMU-975957">
    <property type="pathway name" value="Nonsense Mediated Decay (NMD) enhanced by the Exon Junction Complex (EJC)"/>
</dbReference>
<dbReference type="BioGRID-ORCS" id="67891">
    <property type="hits" value="30 hits in 71 CRISPR screens"/>
</dbReference>
<dbReference type="CD-CODE" id="CE726F99">
    <property type="entry name" value="Postsynaptic density"/>
</dbReference>
<dbReference type="ChiTaRS" id="Rpl4">
    <property type="organism name" value="mouse"/>
</dbReference>
<dbReference type="PRO" id="PR:Q9D8E6"/>
<dbReference type="Proteomes" id="UP000000589">
    <property type="component" value="Chromosome 9"/>
</dbReference>
<dbReference type="RNAct" id="Q9D8E6">
    <property type="molecule type" value="protein"/>
</dbReference>
<dbReference type="Bgee" id="ENSMUSG00000032399">
    <property type="expression patterns" value="Expressed in embryonic post-anal tail and 66 other cell types or tissues"/>
</dbReference>
<dbReference type="ExpressionAtlas" id="Q9D8E6">
    <property type="expression patterns" value="baseline and differential"/>
</dbReference>
<dbReference type="GO" id="GO:0005737">
    <property type="term" value="C:cytoplasm"/>
    <property type="evidence" value="ECO:0000314"/>
    <property type="project" value="ComplexPortal"/>
</dbReference>
<dbReference type="GO" id="GO:0005829">
    <property type="term" value="C:cytosol"/>
    <property type="evidence" value="ECO:0000304"/>
    <property type="project" value="Reactome"/>
</dbReference>
<dbReference type="GO" id="GO:0022625">
    <property type="term" value="C:cytosolic large ribosomal subunit"/>
    <property type="evidence" value="ECO:0000314"/>
    <property type="project" value="UniProtKB"/>
</dbReference>
<dbReference type="GO" id="GO:0016604">
    <property type="term" value="C:nuclear body"/>
    <property type="evidence" value="ECO:0007669"/>
    <property type="project" value="Ensembl"/>
</dbReference>
<dbReference type="GO" id="GO:0005730">
    <property type="term" value="C:nucleolus"/>
    <property type="evidence" value="ECO:0007669"/>
    <property type="project" value="Ensembl"/>
</dbReference>
<dbReference type="GO" id="GO:0098794">
    <property type="term" value="C:postsynapse"/>
    <property type="evidence" value="ECO:0000303"/>
    <property type="project" value="SynGO"/>
</dbReference>
<dbReference type="GO" id="GO:0098793">
    <property type="term" value="C:presynapse"/>
    <property type="evidence" value="ECO:0000303"/>
    <property type="project" value="SynGO"/>
</dbReference>
<dbReference type="GO" id="GO:1990904">
    <property type="term" value="C:ribonucleoprotein complex"/>
    <property type="evidence" value="ECO:0000266"/>
    <property type="project" value="MGI"/>
</dbReference>
<dbReference type="GO" id="GO:0005840">
    <property type="term" value="C:ribosome"/>
    <property type="evidence" value="ECO:0000303"/>
    <property type="project" value="SynGO"/>
</dbReference>
<dbReference type="GO" id="GO:0005791">
    <property type="term" value="C:rough endoplasmic reticulum"/>
    <property type="evidence" value="ECO:0007669"/>
    <property type="project" value="Ensembl"/>
</dbReference>
<dbReference type="GO" id="GO:0003735">
    <property type="term" value="F:structural constituent of ribosome"/>
    <property type="evidence" value="ECO:0000314"/>
    <property type="project" value="UniProtKB"/>
</dbReference>
<dbReference type="GO" id="GO:0002181">
    <property type="term" value="P:cytoplasmic translation"/>
    <property type="evidence" value="ECO:0000303"/>
    <property type="project" value="ComplexPortal"/>
</dbReference>
<dbReference type="GO" id="GO:0140242">
    <property type="term" value="P:translation at postsynapse"/>
    <property type="evidence" value="ECO:0000303"/>
    <property type="project" value="SynGO"/>
</dbReference>
<dbReference type="GO" id="GO:0140236">
    <property type="term" value="P:translation at presynapse"/>
    <property type="evidence" value="ECO:0000303"/>
    <property type="project" value="SynGO"/>
</dbReference>
<dbReference type="FunFam" id="3.40.1370.10:FF:000002">
    <property type="entry name" value="60S ribosomal protein L4"/>
    <property type="match status" value="1"/>
</dbReference>
<dbReference type="Gene3D" id="3.40.1370.10">
    <property type="match status" value="1"/>
</dbReference>
<dbReference type="InterPro" id="IPR025755">
    <property type="entry name" value="Ribos_uL4_C_dom"/>
</dbReference>
<dbReference type="InterPro" id="IPR002136">
    <property type="entry name" value="Ribosomal_uL4"/>
</dbReference>
<dbReference type="InterPro" id="IPR023574">
    <property type="entry name" value="Ribosomal_uL4_dom_sf"/>
</dbReference>
<dbReference type="InterPro" id="IPR013000">
    <property type="entry name" value="Ribosomal_uL4_euk/arc_CS"/>
</dbReference>
<dbReference type="InterPro" id="IPR045240">
    <property type="entry name" value="Ribosomal_uL4_euk/arch"/>
</dbReference>
<dbReference type="PANTHER" id="PTHR19431">
    <property type="entry name" value="60S RIBOSOMAL PROTEIN L4"/>
    <property type="match status" value="1"/>
</dbReference>
<dbReference type="Pfam" id="PF14374">
    <property type="entry name" value="Ribos_L4_asso_C"/>
    <property type="match status" value="1"/>
</dbReference>
<dbReference type="Pfam" id="PF00573">
    <property type="entry name" value="Ribosomal_L4"/>
    <property type="match status" value="1"/>
</dbReference>
<dbReference type="SUPFAM" id="SSF52166">
    <property type="entry name" value="Ribosomal protein L4"/>
    <property type="match status" value="1"/>
</dbReference>
<dbReference type="PROSITE" id="PS00939">
    <property type="entry name" value="RIBOSOMAL_L1E"/>
    <property type="match status" value="1"/>
</dbReference>
<evidence type="ECO:0000250" key="1">
    <source>
        <dbReference type="UniProtKB" id="P36578"/>
    </source>
</evidence>
<evidence type="ECO:0000250" key="2">
    <source>
        <dbReference type="UniProtKB" id="P50878"/>
    </source>
</evidence>
<evidence type="ECO:0000256" key="3">
    <source>
        <dbReference type="SAM" id="MobiDB-lite"/>
    </source>
</evidence>
<evidence type="ECO:0000269" key="4">
    <source>
    </source>
</evidence>
<evidence type="ECO:0000269" key="5">
    <source>
    </source>
</evidence>
<evidence type="ECO:0000269" key="6">
    <source ref="3"/>
</evidence>
<evidence type="ECO:0000305" key="7"/>
<evidence type="ECO:0007744" key="8">
    <source>
        <dbReference type="PDB" id="7CPU"/>
    </source>
</evidence>
<evidence type="ECO:0007744" key="9">
    <source>
        <dbReference type="PDB" id="7CPV"/>
    </source>
</evidence>
<evidence type="ECO:0007744" key="10">
    <source>
    </source>
</evidence>
<evidence type="ECO:0007744" key="11">
    <source>
    </source>
</evidence>
<evidence type="ECO:0007744" key="12">
    <source>
    </source>
</evidence>
<name>RL4_MOUSE</name>
<organism>
    <name type="scientific">Mus musculus</name>
    <name type="common">Mouse</name>
    <dbReference type="NCBI Taxonomy" id="10090"/>
    <lineage>
        <taxon>Eukaryota</taxon>
        <taxon>Metazoa</taxon>
        <taxon>Chordata</taxon>
        <taxon>Craniata</taxon>
        <taxon>Vertebrata</taxon>
        <taxon>Euteleostomi</taxon>
        <taxon>Mammalia</taxon>
        <taxon>Eutheria</taxon>
        <taxon>Euarchontoglires</taxon>
        <taxon>Glires</taxon>
        <taxon>Rodentia</taxon>
        <taxon>Myomorpha</taxon>
        <taxon>Muroidea</taxon>
        <taxon>Muridae</taxon>
        <taxon>Murinae</taxon>
        <taxon>Mus</taxon>
        <taxon>Mus</taxon>
    </lineage>
</organism>
<keyword id="KW-0002">3D-structure</keyword>
<keyword id="KW-0007">Acetylation</keyword>
<keyword id="KW-0164">Citrullination</keyword>
<keyword id="KW-0963">Cytoplasm</keyword>
<keyword id="KW-0903">Direct protein sequencing</keyword>
<keyword id="KW-1017">Isopeptide bond</keyword>
<keyword id="KW-0488">Methylation</keyword>
<keyword id="KW-0597">Phosphoprotein</keyword>
<keyword id="KW-1185">Reference proteome</keyword>
<keyword id="KW-0687">Ribonucleoprotein</keyword>
<keyword id="KW-0689">Ribosomal protein</keyword>
<keyword id="KW-0832">Ubl conjugation</keyword>
<gene>
    <name type="primary">Rpl4</name>
</gene>